<reference key="1">
    <citation type="journal article" date="2004" name="Genome Res.">
        <title>Genome sequence of Haloarcula marismortui: a halophilic archaeon from the Dead Sea.</title>
        <authorList>
            <person name="Baliga N.S."/>
            <person name="Bonneau R."/>
            <person name="Facciotti M.T."/>
            <person name="Pan M."/>
            <person name="Glusman G."/>
            <person name="Deutsch E.W."/>
            <person name="Shannon P."/>
            <person name="Chiu Y."/>
            <person name="Weng R.S."/>
            <person name="Gan R.R."/>
            <person name="Hung P."/>
            <person name="Date S.V."/>
            <person name="Marcotte E."/>
            <person name="Hood L."/>
            <person name="Ng W.V."/>
        </authorList>
    </citation>
    <scope>NUCLEOTIDE SEQUENCE [LARGE SCALE GENOMIC DNA]</scope>
    <source>
        <strain>ATCC 43049 / DSM 3752 / JCM 8966 / VKM B-1809</strain>
    </source>
</reference>
<feature type="chain" id="PRO_0000144169" description="Putative transcriptional regulatory protein rrnAC0199">
    <location>
        <begin position="1"/>
        <end position="159"/>
    </location>
</feature>
<comment type="function">
    <text evidence="1">Putative transcriptional regulator.</text>
</comment>
<comment type="similarity">
    <text evidence="1">Belongs to the Tfx family.</text>
</comment>
<comment type="sequence caution" evidence="2">
    <conflict type="erroneous initiation">
        <sequence resource="EMBL-CDS" id="AAV45260"/>
    </conflict>
</comment>
<organism>
    <name type="scientific">Haloarcula marismortui (strain ATCC 43049 / DSM 3752 / JCM 8966 / VKM B-1809)</name>
    <name type="common">Halobacterium marismortui</name>
    <dbReference type="NCBI Taxonomy" id="272569"/>
    <lineage>
        <taxon>Archaea</taxon>
        <taxon>Methanobacteriati</taxon>
        <taxon>Methanobacteriota</taxon>
        <taxon>Stenosarchaea group</taxon>
        <taxon>Halobacteria</taxon>
        <taxon>Halobacteriales</taxon>
        <taxon>Haloarculaceae</taxon>
        <taxon>Haloarcula</taxon>
    </lineage>
</organism>
<dbReference type="EMBL" id="AY596297">
    <property type="protein sequence ID" value="AAV45260.1"/>
    <property type="status" value="ALT_INIT"/>
    <property type="molecule type" value="Genomic_DNA"/>
</dbReference>
<dbReference type="RefSeq" id="WP_004962990.1">
    <property type="nucleotide sequence ID" value="NZ_CP039138.1"/>
</dbReference>
<dbReference type="SMR" id="Q5V5E2"/>
<dbReference type="STRING" id="272569.rrnAC0199"/>
<dbReference type="PaxDb" id="272569-rrnAC0199"/>
<dbReference type="EnsemblBacteria" id="AAV45260">
    <property type="protein sequence ID" value="AAV45260"/>
    <property type="gene ID" value="rrnAC0199"/>
</dbReference>
<dbReference type="KEGG" id="hma:rrnAC0199"/>
<dbReference type="PATRIC" id="fig|272569.17.peg.992"/>
<dbReference type="eggNOG" id="arCOG04554">
    <property type="taxonomic scope" value="Archaea"/>
</dbReference>
<dbReference type="HOGENOM" id="CLU_125807_0_0_2"/>
<dbReference type="Proteomes" id="UP000001169">
    <property type="component" value="Chromosome I"/>
</dbReference>
<dbReference type="GO" id="GO:0003677">
    <property type="term" value="F:DNA binding"/>
    <property type="evidence" value="ECO:0007669"/>
    <property type="project" value="UniProtKB-KW"/>
</dbReference>
<dbReference type="GO" id="GO:0003700">
    <property type="term" value="F:DNA-binding transcription factor activity"/>
    <property type="evidence" value="ECO:0007669"/>
    <property type="project" value="UniProtKB-UniRule"/>
</dbReference>
<dbReference type="GO" id="GO:0006352">
    <property type="term" value="P:DNA-templated transcription initiation"/>
    <property type="evidence" value="ECO:0007669"/>
    <property type="project" value="InterPro"/>
</dbReference>
<dbReference type="Gene3D" id="3.30.1190.10">
    <property type="entry name" value="DNA-binding protein Tfx superfamily, archaea"/>
    <property type="match status" value="1"/>
</dbReference>
<dbReference type="HAMAP" id="MF_00620">
    <property type="entry name" value="HTH_type_Tfx"/>
    <property type="match status" value="1"/>
</dbReference>
<dbReference type="InterPro" id="IPR007630">
    <property type="entry name" value="RNA_pol_sigma70_r4"/>
</dbReference>
<dbReference type="InterPro" id="IPR029291">
    <property type="entry name" value="Tfx_C"/>
</dbReference>
<dbReference type="InterPro" id="IPR004645">
    <property type="entry name" value="Tfx_DNA-bd_arc"/>
</dbReference>
<dbReference type="InterPro" id="IPR018384">
    <property type="entry name" value="Tfx_DNA-bd_euryarc"/>
</dbReference>
<dbReference type="InterPro" id="IPR036657">
    <property type="entry name" value="Tfx_DNA-bd_sf_arc"/>
</dbReference>
<dbReference type="NCBIfam" id="NF003054">
    <property type="entry name" value="PRK03975.1-1"/>
    <property type="match status" value="1"/>
</dbReference>
<dbReference type="NCBIfam" id="NF003055">
    <property type="entry name" value="PRK03975.1-2"/>
    <property type="match status" value="1"/>
</dbReference>
<dbReference type="NCBIfam" id="TIGR00721">
    <property type="entry name" value="tfx"/>
    <property type="match status" value="1"/>
</dbReference>
<dbReference type="Pfam" id="PF04545">
    <property type="entry name" value="Sigma70_r4"/>
    <property type="match status" value="1"/>
</dbReference>
<dbReference type="Pfam" id="PF14601">
    <property type="entry name" value="TFX_C"/>
    <property type="match status" value="1"/>
</dbReference>
<dbReference type="PIRSF" id="PIRSF004932">
    <property type="entry name" value="DNA_bind_Tfx"/>
    <property type="match status" value="1"/>
</dbReference>
<dbReference type="SUPFAM" id="SSF89915">
    <property type="entry name" value="DNA-binding protein Tfx"/>
    <property type="match status" value="1"/>
</dbReference>
<keyword id="KW-0238">DNA-binding</keyword>
<keyword id="KW-1185">Reference proteome</keyword>
<keyword id="KW-0804">Transcription</keyword>
<keyword id="KW-0805">Transcription regulation</keyword>
<gene>
    <name type="ordered locus">rrnAC0199</name>
</gene>
<accession>Q5V5E2</accession>
<evidence type="ECO:0000255" key="1">
    <source>
        <dbReference type="HAMAP-Rule" id="MF_00620"/>
    </source>
</evidence>
<evidence type="ECO:0000305" key="2"/>
<proteinExistence type="inferred from homology"/>
<sequence>MDERIDPDELLAAVGFDADESVLTRRQAEVLALREHDIRQSDIGELLGTSRANISSIERNARENVEKARQTVAFANTLTAPVCVDIEAGTDIYDIPPTVYAACDEAGVEVNYGSSNLLQLIDDAVDGAIQQDTVQVPLRIDVTNDGVVHVRGQSAERTE</sequence>
<protein>
    <recommendedName>
        <fullName evidence="1">Putative transcriptional regulatory protein rrnAC0199</fullName>
    </recommendedName>
</protein>
<name>Y199_HALMA</name>